<keyword id="KW-0169">Cobalamin biosynthesis</keyword>
<keyword id="KW-0328">Glycosyltransferase</keyword>
<keyword id="KW-1185">Reference proteome</keyword>
<keyword id="KW-0808">Transferase</keyword>
<evidence type="ECO:0000255" key="1">
    <source>
        <dbReference type="HAMAP-Rule" id="MF_00230"/>
    </source>
</evidence>
<comment type="function">
    <text evidence="1">Catalyzes the synthesis of alpha-ribazole-5'-phosphate from nicotinate mononucleotide (NAMN) and 5,6-dimethylbenzimidazole (DMB).</text>
</comment>
<comment type="catalytic activity">
    <reaction evidence="1">
        <text>5,6-dimethylbenzimidazole + nicotinate beta-D-ribonucleotide = alpha-ribazole 5'-phosphate + nicotinate + H(+)</text>
        <dbReference type="Rhea" id="RHEA:11196"/>
        <dbReference type="ChEBI" id="CHEBI:15378"/>
        <dbReference type="ChEBI" id="CHEBI:15890"/>
        <dbReference type="ChEBI" id="CHEBI:32544"/>
        <dbReference type="ChEBI" id="CHEBI:57502"/>
        <dbReference type="ChEBI" id="CHEBI:57918"/>
        <dbReference type="EC" id="2.4.2.21"/>
    </reaction>
</comment>
<comment type="pathway">
    <text evidence="1">Nucleoside biosynthesis; alpha-ribazole biosynthesis; alpha-ribazole from 5,6-dimethylbenzimidazole: step 1/2.</text>
</comment>
<comment type="similarity">
    <text evidence="1">Belongs to the CobT family.</text>
</comment>
<feature type="chain" id="PRO_1000100467" description="Nicotinate-nucleotide--dimethylbenzimidazole phosphoribosyltransferase">
    <location>
        <begin position="1"/>
        <end position="354"/>
    </location>
</feature>
<feature type="active site" description="Proton acceptor" evidence="1">
    <location>
        <position position="319"/>
    </location>
</feature>
<accession>B4SH92</accession>
<proteinExistence type="inferred from homology"/>
<dbReference type="EC" id="2.4.2.21" evidence="1"/>
<dbReference type="EMBL" id="CP001110">
    <property type="protein sequence ID" value="ACF43559.1"/>
    <property type="molecule type" value="Genomic_DNA"/>
</dbReference>
<dbReference type="RefSeq" id="WP_012508050.1">
    <property type="nucleotide sequence ID" value="NC_011060.1"/>
</dbReference>
<dbReference type="SMR" id="B4SH92"/>
<dbReference type="STRING" id="324925.Ppha_1294"/>
<dbReference type="KEGG" id="pph:Ppha_1294"/>
<dbReference type="eggNOG" id="COG2038">
    <property type="taxonomic scope" value="Bacteria"/>
</dbReference>
<dbReference type="HOGENOM" id="CLU_002982_0_0_10"/>
<dbReference type="OrthoDB" id="9781491at2"/>
<dbReference type="UniPathway" id="UPA00061">
    <property type="reaction ID" value="UER00516"/>
</dbReference>
<dbReference type="Proteomes" id="UP000002724">
    <property type="component" value="Chromosome"/>
</dbReference>
<dbReference type="GO" id="GO:0008939">
    <property type="term" value="F:nicotinate-nucleotide-dimethylbenzimidazole phosphoribosyltransferase activity"/>
    <property type="evidence" value="ECO:0007669"/>
    <property type="project" value="UniProtKB-UniRule"/>
</dbReference>
<dbReference type="GO" id="GO:0009236">
    <property type="term" value="P:cobalamin biosynthetic process"/>
    <property type="evidence" value="ECO:0007669"/>
    <property type="project" value="UniProtKB-KW"/>
</dbReference>
<dbReference type="CDD" id="cd02439">
    <property type="entry name" value="DMB-PRT_CobT"/>
    <property type="match status" value="1"/>
</dbReference>
<dbReference type="FunFam" id="3.40.50.10210:FF:000001">
    <property type="entry name" value="Nicotinate-nucleotide--dimethylbenzimidazole phosphoribosyltransferase"/>
    <property type="match status" value="1"/>
</dbReference>
<dbReference type="Gene3D" id="1.10.1610.10">
    <property type="match status" value="1"/>
</dbReference>
<dbReference type="Gene3D" id="3.40.50.10210">
    <property type="match status" value="1"/>
</dbReference>
<dbReference type="HAMAP" id="MF_00230">
    <property type="entry name" value="CobT"/>
    <property type="match status" value="1"/>
</dbReference>
<dbReference type="InterPro" id="IPR003200">
    <property type="entry name" value="Nict_dMeBzImd_PRibTrfase"/>
</dbReference>
<dbReference type="InterPro" id="IPR017846">
    <property type="entry name" value="Nict_dMeBzImd_PRibTrfase_bact"/>
</dbReference>
<dbReference type="InterPro" id="IPR023195">
    <property type="entry name" value="Nict_dMeBzImd_PRibTrfase_N"/>
</dbReference>
<dbReference type="InterPro" id="IPR036087">
    <property type="entry name" value="Nict_dMeBzImd_PRibTrfase_sf"/>
</dbReference>
<dbReference type="NCBIfam" id="TIGR03160">
    <property type="entry name" value="cobT_DBIPRT"/>
    <property type="match status" value="1"/>
</dbReference>
<dbReference type="NCBIfam" id="NF000996">
    <property type="entry name" value="PRK00105.1"/>
    <property type="match status" value="1"/>
</dbReference>
<dbReference type="PANTHER" id="PTHR43463">
    <property type="entry name" value="NICOTINATE-NUCLEOTIDE--DIMETHYLBENZIMIDAZOLE PHOSPHORIBOSYLTRANSFERASE"/>
    <property type="match status" value="1"/>
</dbReference>
<dbReference type="PANTHER" id="PTHR43463:SF1">
    <property type="entry name" value="NICOTINATE-NUCLEOTIDE--DIMETHYLBENZIMIDAZOLE PHOSPHORIBOSYLTRANSFERASE"/>
    <property type="match status" value="1"/>
</dbReference>
<dbReference type="Pfam" id="PF02277">
    <property type="entry name" value="DBI_PRT"/>
    <property type="match status" value="1"/>
</dbReference>
<dbReference type="SUPFAM" id="SSF52733">
    <property type="entry name" value="Nicotinate mononucleotide:5,6-dimethylbenzimidazole phosphoribosyltransferase (CobT)"/>
    <property type="match status" value="1"/>
</dbReference>
<reference key="1">
    <citation type="submission" date="2008-06" db="EMBL/GenBank/DDBJ databases">
        <title>Complete sequence of Pelodictyon phaeoclathratiforme BU-1.</title>
        <authorList>
            <consortium name="US DOE Joint Genome Institute"/>
            <person name="Lucas S."/>
            <person name="Copeland A."/>
            <person name="Lapidus A."/>
            <person name="Glavina del Rio T."/>
            <person name="Dalin E."/>
            <person name="Tice H."/>
            <person name="Bruce D."/>
            <person name="Goodwin L."/>
            <person name="Pitluck S."/>
            <person name="Schmutz J."/>
            <person name="Larimer F."/>
            <person name="Land M."/>
            <person name="Hauser L."/>
            <person name="Kyrpides N."/>
            <person name="Mikhailova N."/>
            <person name="Liu Z."/>
            <person name="Li T."/>
            <person name="Zhao F."/>
            <person name="Overmann J."/>
            <person name="Bryant D.A."/>
            <person name="Richardson P."/>
        </authorList>
    </citation>
    <scope>NUCLEOTIDE SEQUENCE [LARGE SCALE GENOMIC DNA]</scope>
    <source>
        <strain>DSM 5477 / BU-1</strain>
    </source>
</reference>
<name>COBT_PELPB</name>
<gene>
    <name evidence="1" type="primary">cobT</name>
    <name type="ordered locus">Ppha_1294</name>
</gene>
<protein>
    <recommendedName>
        <fullName evidence="1">Nicotinate-nucleotide--dimethylbenzimidazole phosphoribosyltransferase</fullName>
        <shortName evidence="1">NN:DBI PRT</shortName>
        <ecNumber evidence="1">2.4.2.21</ecNumber>
    </recommendedName>
    <alternativeName>
        <fullName evidence="1">N(1)-alpha-phosphoribosyltransferase</fullName>
    </alternativeName>
</protein>
<sequence>MPEKLQLLLDRIKPASRSLSDAARAHLDDLTKPQGSLGRLEEIALKYVLATGNLSPLLSKKKICCFAADHGVAAEGVSAFPAEVTPQMVYNMLGGGAAINVLTRHAGVDLDVVDMGVNHDFPDLAGLVKRKVQPGSANMATGPAMSEEDALQALLCGAELAAEAQEAGYHLLGTGEMGIANTTPATALYAVLLDVSVESITGRGTGIDDERLLHKIAVIKQAIAVNGSRCTTPFATLAALGGYEIAAIAGFILGAAAARTPVVVDGFISSAGAVVALKLCPAVEDYLFFSHLSNEQGHRAVMEKLGARPILDLDLRLGEGTGAAIAMQLIEGAVKIYNEMATFSAARVSEKSGE</sequence>
<organism>
    <name type="scientific">Pelodictyon phaeoclathratiforme (strain DSM 5477 / BU-1)</name>
    <dbReference type="NCBI Taxonomy" id="324925"/>
    <lineage>
        <taxon>Bacteria</taxon>
        <taxon>Pseudomonadati</taxon>
        <taxon>Chlorobiota</taxon>
        <taxon>Chlorobiia</taxon>
        <taxon>Chlorobiales</taxon>
        <taxon>Chlorobiaceae</taxon>
        <taxon>Chlorobium/Pelodictyon group</taxon>
        <taxon>Pelodictyon</taxon>
    </lineage>
</organism>